<feature type="signal peptide" evidence="3">
    <location>
        <begin position="1"/>
        <end position="21"/>
    </location>
</feature>
<feature type="chain" id="PRO_0000259986" description="GDNF family receptor alpha-2">
    <location>
        <begin position="22"/>
        <end position="440"/>
    </location>
</feature>
<feature type="propeptide" id="PRO_0000259987" description="Removed in mature form" evidence="3">
    <location>
        <begin position="441"/>
        <end position="464"/>
    </location>
</feature>
<feature type="region of interest" description="Disordered" evidence="4">
    <location>
        <begin position="360"/>
        <end position="392"/>
    </location>
</feature>
<feature type="compositionally biased region" description="Polar residues" evidence="4">
    <location>
        <begin position="360"/>
        <end position="374"/>
    </location>
</feature>
<feature type="compositionally biased region" description="Low complexity" evidence="4">
    <location>
        <begin position="381"/>
        <end position="392"/>
    </location>
</feature>
<feature type="lipid moiety-binding region" description="GPI-anchor amidated asparagine" evidence="3">
    <location>
        <position position="440"/>
    </location>
</feature>
<feature type="glycosylation site" description="N-linked (GlcNAc...) asparagine" evidence="3">
    <location>
        <position position="52"/>
    </location>
</feature>
<feature type="glycosylation site" description="N-linked (GlcNAc...) asparagine" evidence="3">
    <location>
        <position position="357"/>
    </location>
</feature>
<feature type="glycosylation site" description="N-linked (GlcNAc...) asparagine" evidence="3">
    <location>
        <position position="413"/>
    </location>
</feature>
<feature type="disulfide bond" evidence="1">
    <location>
        <begin position="40"/>
        <end position="93"/>
    </location>
</feature>
<feature type="disulfide bond" evidence="1">
    <location>
        <begin position="47"/>
        <end position="53"/>
    </location>
</feature>
<feature type="disulfide bond" evidence="1">
    <location>
        <begin position="63"/>
        <end position="78"/>
    </location>
</feature>
<feature type="disulfide bond" evidence="1">
    <location>
        <begin position="95"/>
        <end position="105"/>
    </location>
</feature>
<feature type="disulfide bond" evidence="1">
    <location>
        <begin position="161"/>
        <end position="222"/>
    </location>
</feature>
<feature type="disulfide bond" evidence="1">
    <location>
        <begin position="168"/>
        <end position="174"/>
    </location>
</feature>
<feature type="disulfide bond" evidence="1">
    <location>
        <begin position="185"/>
        <end position="200"/>
    </location>
</feature>
<feature type="disulfide bond" evidence="1">
    <location>
        <begin position="195"/>
        <end position="241"/>
    </location>
</feature>
<feature type="disulfide bond" evidence="1">
    <location>
        <begin position="224"/>
        <end position="229"/>
    </location>
</feature>
<feature type="disulfide bond" evidence="1">
    <location>
        <begin position="251"/>
        <end position="323"/>
    </location>
</feature>
<feature type="disulfide bond" evidence="1">
    <location>
        <begin position="258"/>
        <end position="264"/>
    </location>
</feature>
<feature type="disulfide bond" evidence="1">
    <location>
        <begin position="275"/>
        <end position="293"/>
    </location>
</feature>
<feature type="disulfide bond" evidence="1">
    <location>
        <begin position="285"/>
        <end position="347"/>
    </location>
</feature>
<feature type="disulfide bond" evidence="1">
    <location>
        <begin position="325"/>
        <end position="335"/>
    </location>
</feature>
<feature type="sequence conflict" description="In Ref. 2; AAI20282." evidence="5" ref="2">
    <original>A</original>
    <variation>S</variation>
    <location>
        <position position="81"/>
    </location>
</feature>
<feature type="sequence conflict" description="In Ref. 2; AAI20282." evidence="5" ref="2">
    <original>K</original>
    <variation>Q</variation>
    <location>
        <position position="416"/>
    </location>
</feature>
<reference key="1">
    <citation type="journal article" date="2005" name="BMC Genomics">
        <title>Characterization of 954 bovine full-CDS cDNA sequences.</title>
        <authorList>
            <person name="Harhay G.P."/>
            <person name="Sonstegard T.S."/>
            <person name="Keele J.W."/>
            <person name="Heaton M.P."/>
            <person name="Clawson M.L."/>
            <person name="Snelling W.M."/>
            <person name="Wiedmann R.T."/>
            <person name="Van Tassell C.P."/>
            <person name="Smith T.P.L."/>
        </authorList>
    </citation>
    <scope>NUCLEOTIDE SEQUENCE [LARGE SCALE MRNA]</scope>
</reference>
<reference key="2">
    <citation type="submission" date="2006-08" db="EMBL/GenBank/DDBJ databases">
        <authorList>
            <consortium name="NIH - Mammalian Gene Collection (MGC) project"/>
        </authorList>
    </citation>
    <scope>NUCLEOTIDE SEQUENCE [LARGE SCALE MRNA]</scope>
    <source>
        <strain>Hereford</strain>
        <tissue>Fetal lung</tissue>
    </source>
</reference>
<organism>
    <name type="scientific">Bos taurus</name>
    <name type="common">Bovine</name>
    <dbReference type="NCBI Taxonomy" id="9913"/>
    <lineage>
        <taxon>Eukaryota</taxon>
        <taxon>Metazoa</taxon>
        <taxon>Chordata</taxon>
        <taxon>Craniata</taxon>
        <taxon>Vertebrata</taxon>
        <taxon>Euteleostomi</taxon>
        <taxon>Mammalia</taxon>
        <taxon>Eutheria</taxon>
        <taxon>Laurasiatheria</taxon>
        <taxon>Artiodactyla</taxon>
        <taxon>Ruminantia</taxon>
        <taxon>Pecora</taxon>
        <taxon>Bovidae</taxon>
        <taxon>Bovinae</taxon>
        <taxon>Bos</taxon>
    </lineage>
</organism>
<gene>
    <name type="primary">GFRA2</name>
</gene>
<keyword id="KW-1003">Cell membrane</keyword>
<keyword id="KW-1015">Disulfide bond</keyword>
<keyword id="KW-0325">Glycoprotein</keyword>
<keyword id="KW-0336">GPI-anchor</keyword>
<keyword id="KW-0449">Lipoprotein</keyword>
<keyword id="KW-0472">Membrane</keyword>
<keyword id="KW-0675">Receptor</keyword>
<keyword id="KW-1185">Reference proteome</keyword>
<keyword id="KW-0732">Signal</keyword>
<accession>Q5E9X0</accession>
<accession>Q0P5A9</accession>
<dbReference type="EMBL" id="BT020800">
    <property type="protein sequence ID" value="AAX08817.1"/>
    <property type="molecule type" value="mRNA"/>
</dbReference>
<dbReference type="EMBL" id="BC120281">
    <property type="protein sequence ID" value="AAI20282.1"/>
    <property type="molecule type" value="mRNA"/>
</dbReference>
<dbReference type="RefSeq" id="NP_001015595.2">
    <property type="nucleotide sequence ID" value="NM_001015595.2"/>
</dbReference>
<dbReference type="SMR" id="Q5E9X0"/>
<dbReference type="FunCoup" id="Q5E9X0">
    <property type="interactions" value="448"/>
</dbReference>
<dbReference type="STRING" id="9913.ENSBTAP00000063328"/>
<dbReference type="GlyCosmos" id="Q5E9X0">
    <property type="glycosylation" value="3 sites, No reported glycans"/>
</dbReference>
<dbReference type="GlyGen" id="Q5E9X0">
    <property type="glycosylation" value="3 sites"/>
</dbReference>
<dbReference type="PaxDb" id="9913-ENSBTAP00000027545"/>
<dbReference type="GeneID" id="514036"/>
<dbReference type="KEGG" id="bta:514036"/>
<dbReference type="CTD" id="2675"/>
<dbReference type="eggNOG" id="ENOG502QS3P">
    <property type="taxonomic scope" value="Eukaryota"/>
</dbReference>
<dbReference type="InParanoid" id="Q5E9X0"/>
<dbReference type="OrthoDB" id="9435188at2759"/>
<dbReference type="Proteomes" id="UP000009136">
    <property type="component" value="Unplaced"/>
</dbReference>
<dbReference type="GO" id="GO:0009897">
    <property type="term" value="C:external side of plasma membrane"/>
    <property type="evidence" value="ECO:0000318"/>
    <property type="project" value="GO_Central"/>
</dbReference>
<dbReference type="GO" id="GO:0043235">
    <property type="term" value="C:receptor complex"/>
    <property type="evidence" value="ECO:0000318"/>
    <property type="project" value="GO_Central"/>
</dbReference>
<dbReference type="GO" id="GO:0016167">
    <property type="term" value="F:glial cell-derived neurotrophic factor receptor activity"/>
    <property type="evidence" value="ECO:0000250"/>
    <property type="project" value="UniProtKB"/>
</dbReference>
<dbReference type="GO" id="GO:1904399">
    <property type="term" value="F:heparan sulfate binding"/>
    <property type="evidence" value="ECO:0000250"/>
    <property type="project" value="UniProtKB"/>
</dbReference>
<dbReference type="GO" id="GO:0035860">
    <property type="term" value="P:glial cell-derived neurotrophic factor receptor signaling pathway"/>
    <property type="evidence" value="ECO:0000250"/>
    <property type="project" value="UniProtKB"/>
</dbReference>
<dbReference type="GO" id="GO:0007399">
    <property type="term" value="P:nervous system development"/>
    <property type="evidence" value="ECO:0000318"/>
    <property type="project" value="GO_Central"/>
</dbReference>
<dbReference type="FunFam" id="1.10.220.110:FF:000001">
    <property type="entry name" value="GDNF family receptor alpha"/>
    <property type="match status" value="1"/>
</dbReference>
<dbReference type="Gene3D" id="1.10.220.110">
    <property type="entry name" value="GDNF binding domain"/>
    <property type="match status" value="1"/>
</dbReference>
<dbReference type="InterPro" id="IPR016017">
    <property type="entry name" value="GDNF/GAS1"/>
</dbReference>
<dbReference type="InterPro" id="IPR037193">
    <property type="entry name" value="GDNF_alpha"/>
</dbReference>
<dbReference type="InterPro" id="IPR003438">
    <property type="entry name" value="GDNF_rcpt"/>
</dbReference>
<dbReference type="InterPro" id="IPR003504">
    <property type="entry name" value="GDNF_rcpt_a2"/>
</dbReference>
<dbReference type="InterPro" id="IPR017372">
    <property type="entry name" value="Glial_neurotroph_fac_rcpt_a1/2"/>
</dbReference>
<dbReference type="PANTHER" id="PTHR10269:SF4">
    <property type="entry name" value="GDNF FAMILY RECEPTOR ALPHA-2"/>
    <property type="match status" value="1"/>
</dbReference>
<dbReference type="PANTHER" id="PTHR10269">
    <property type="entry name" value="GDNF RECEPTOR ALPHA"/>
    <property type="match status" value="1"/>
</dbReference>
<dbReference type="Pfam" id="PF02351">
    <property type="entry name" value="GDNF"/>
    <property type="match status" value="3"/>
</dbReference>
<dbReference type="PIRSF" id="PIRSF038071">
    <property type="entry name" value="GDNF_family_receptor_alpha"/>
    <property type="match status" value="1"/>
</dbReference>
<dbReference type="PRINTS" id="PR01318">
    <property type="entry name" value="GDNFRALPHA2"/>
</dbReference>
<dbReference type="PRINTS" id="PR01316">
    <property type="entry name" value="GDNFRECEPTOR"/>
</dbReference>
<dbReference type="SMART" id="SM00907">
    <property type="entry name" value="GDNF"/>
    <property type="match status" value="3"/>
</dbReference>
<dbReference type="SUPFAM" id="SSF110035">
    <property type="entry name" value="GDNF receptor-like"/>
    <property type="match status" value="1"/>
</dbReference>
<name>GFRA2_BOVIN</name>
<sequence length="464" mass="51659">MILANAFCLFFFLDETLRSLASPSSPQGPELHGWRPPVDCVRANELCAAESNCSSRYRTLRQCLAGRDRNTMLANKECQAALEVLQESPLYDCRCKRGMKKELQCLQIYWSIHLGLTEGEEFYEASPYEPVTARLSDIFRLASIFSGTGADPAVSTKSNHCLDAAKACNLNDNCKKLRSSYISICNREISPTERCNRRKCHKALRQFFDRVPSEYTYRMLFCSCQDQACAERRRQTILPSCSYEDKEKPNCLDLRSLCRTDHLCRSRLADFHANCRASYQTLTSCPTDNYQACLGSYAGMIGFDITPNYVDSSPTGIVVSPWCSCRGSGNMEEECEKFLKDFTENPCLRNAIQAFGNGTDVNLSPKSPPFQATQAPRVDKTPSLPDDLSDSTSLGTSVISTCTSVQDQGLKANNSKELSMCFTELTTNIIPGSKRVIKPNSGPRRTRPSAALTAASFLMLKLAL</sequence>
<comment type="function">
    <text evidence="1">Receptor for neurturin (NRTN), a growth factor that supports the survival of sympathetic neurons. NRTN-binding leads to autophosphorylation and activation of the RET receptor. Also able to mediate GDNF signaling through the RET tyrosine kinase receptor.</text>
</comment>
<comment type="subunit">
    <text evidence="1">Interacts with NRTN ligand and RET: forms a 2:2:2 ternary complex composed of NRTN ligand, GFRA2 and RET receptor. Also forms a 4:4:4 tetrameric complex composed of 4 copies of NRTN ligand, GFRA2 and RET receptor, which prevents endocytosis of RET. Interacts with SORL1.</text>
</comment>
<comment type="subcellular location">
    <subcellularLocation>
        <location evidence="2">Cell membrane</location>
        <topology evidence="2">Lipid-anchor</topology>
        <topology evidence="2">GPI-anchor</topology>
    </subcellularLocation>
</comment>
<comment type="similarity">
    <text evidence="5">Belongs to the GDNFR family.</text>
</comment>
<protein>
    <recommendedName>
        <fullName>GDNF family receptor alpha-2</fullName>
        <shortName>GDNF receptor alpha-2</shortName>
        <shortName>GDNFR-alpha-2</shortName>
        <shortName>GFR-alpha-2</shortName>
    </recommendedName>
</protein>
<evidence type="ECO:0000250" key="1">
    <source>
        <dbReference type="UniProtKB" id="O00451"/>
    </source>
</evidence>
<evidence type="ECO:0000250" key="2">
    <source>
        <dbReference type="UniProtKB" id="O08842"/>
    </source>
</evidence>
<evidence type="ECO:0000255" key="3"/>
<evidence type="ECO:0000256" key="4">
    <source>
        <dbReference type="SAM" id="MobiDB-lite"/>
    </source>
</evidence>
<evidence type="ECO:0000305" key="5"/>
<proteinExistence type="evidence at transcript level"/>